<proteinExistence type="evidence at transcript level"/>
<organism>
    <name type="scientific">Bos taurus</name>
    <name type="common">Bovine</name>
    <dbReference type="NCBI Taxonomy" id="9913"/>
    <lineage>
        <taxon>Eukaryota</taxon>
        <taxon>Metazoa</taxon>
        <taxon>Chordata</taxon>
        <taxon>Craniata</taxon>
        <taxon>Vertebrata</taxon>
        <taxon>Euteleostomi</taxon>
        <taxon>Mammalia</taxon>
        <taxon>Eutheria</taxon>
        <taxon>Laurasiatheria</taxon>
        <taxon>Artiodactyla</taxon>
        <taxon>Ruminantia</taxon>
        <taxon>Pecora</taxon>
        <taxon>Bovidae</taxon>
        <taxon>Bovinae</taxon>
        <taxon>Bos</taxon>
    </lineage>
</organism>
<reference key="1">
    <citation type="submission" date="2006-02" db="EMBL/GenBank/DDBJ databases">
        <authorList>
            <consortium name="NIH - Mammalian Gene Collection (MGC) project"/>
        </authorList>
    </citation>
    <scope>NUCLEOTIDE SEQUENCE [LARGE SCALE MRNA]</scope>
    <source>
        <strain>Hereford</strain>
        <tissue>Uterus</tissue>
    </source>
</reference>
<feature type="chain" id="PRO_0000251715" description="Transmembrane protein 125">
    <location>
        <begin position="1"/>
        <end position="219"/>
    </location>
</feature>
<feature type="transmembrane region" description="Helical" evidence="1">
    <location>
        <begin position="36"/>
        <end position="56"/>
    </location>
</feature>
<feature type="transmembrane region" description="Helical" evidence="1">
    <location>
        <begin position="68"/>
        <end position="88"/>
    </location>
</feature>
<feature type="transmembrane region" description="Helical" evidence="1">
    <location>
        <begin position="114"/>
        <end position="134"/>
    </location>
</feature>
<feature type="transmembrane region" description="Helical" evidence="1">
    <location>
        <begin position="147"/>
        <end position="167"/>
    </location>
</feature>
<evidence type="ECO:0000255" key="1"/>
<evidence type="ECO:0000305" key="2"/>
<keyword id="KW-0472">Membrane</keyword>
<keyword id="KW-1185">Reference proteome</keyword>
<keyword id="KW-0812">Transmembrane</keyword>
<keyword id="KW-1133">Transmembrane helix</keyword>
<comment type="subcellular location">
    <subcellularLocation>
        <location evidence="2">Membrane</location>
        <topology evidence="2">Multi-pass membrane protein</topology>
    </subcellularLocation>
</comment>
<name>TM125_BOVIN</name>
<gene>
    <name type="primary">TMEM125</name>
</gene>
<sequence length="219" mass="22160">MSEGEAQAPRGRGLPPDVLAEQVELWWSQQPRRSALCFAVAVGLVAGCGAGGVALLSSTSSRSGEWRLAVGTALCLLALLVLVKQLMSSAVQDMNCIRQPHHVALLRSGGGADALVVLLSGLVLLVTGLTLAGLAAAPAPARPLAAMLSVGITLAASGALLLLGLLLYQVAVSGHCPPARTAAPTTRSDRSGNGSVFSISGQLSAGQRHETTSSIASLI</sequence>
<dbReference type="EMBL" id="BC113299">
    <property type="protein sequence ID" value="AAI13300.1"/>
    <property type="molecule type" value="mRNA"/>
</dbReference>
<dbReference type="RefSeq" id="NP_001039488.1">
    <property type="nucleotide sequence ID" value="NM_001046023.3"/>
</dbReference>
<dbReference type="RefSeq" id="XP_005204745.1">
    <property type="nucleotide sequence ID" value="XM_005204688.3"/>
</dbReference>
<dbReference type="RefSeq" id="XP_015321524.1">
    <property type="nucleotide sequence ID" value="XM_015466038.1"/>
</dbReference>
<dbReference type="FunCoup" id="Q2HJ59">
    <property type="interactions" value="54"/>
</dbReference>
<dbReference type="STRING" id="9913.ENSBTAP00000028077"/>
<dbReference type="PaxDb" id="9913-ENSBTAP00000028077"/>
<dbReference type="Ensembl" id="ENSBTAT00000028077.5">
    <property type="protein sequence ID" value="ENSBTAP00000028077.4"/>
    <property type="gene ID" value="ENSBTAG00000021082.5"/>
</dbReference>
<dbReference type="GeneID" id="509101"/>
<dbReference type="KEGG" id="bta:509101"/>
<dbReference type="CTD" id="128218"/>
<dbReference type="VEuPathDB" id="HostDB:ENSBTAG00000021082"/>
<dbReference type="VGNC" id="VGNC:35958">
    <property type="gene designation" value="TMEM125"/>
</dbReference>
<dbReference type="eggNOG" id="ENOG502S0IK">
    <property type="taxonomic scope" value="Eukaryota"/>
</dbReference>
<dbReference type="GeneTree" id="ENSGT00390000003015"/>
<dbReference type="HOGENOM" id="CLU_118850_0_0_1"/>
<dbReference type="InParanoid" id="Q2HJ59"/>
<dbReference type="OMA" id="MNCVRQP"/>
<dbReference type="OrthoDB" id="8950495at2759"/>
<dbReference type="TreeFam" id="TF332758"/>
<dbReference type="Proteomes" id="UP000009136">
    <property type="component" value="Chromosome 3"/>
</dbReference>
<dbReference type="Bgee" id="ENSBTAG00000021082">
    <property type="expression patterns" value="Expressed in pons and 77 other cell types or tissues"/>
</dbReference>
<dbReference type="GO" id="GO:0016020">
    <property type="term" value="C:membrane"/>
    <property type="evidence" value="ECO:0007669"/>
    <property type="project" value="UniProtKB-SubCell"/>
</dbReference>
<dbReference type="InterPro" id="IPR028165">
    <property type="entry name" value="TMEM125"/>
</dbReference>
<dbReference type="PANTHER" id="PTHR31416">
    <property type="entry name" value="TRANSMEMBRANE PROTEIN 125"/>
    <property type="match status" value="1"/>
</dbReference>
<dbReference type="PANTHER" id="PTHR31416:SF1">
    <property type="entry name" value="TRANSMEMBRANE PROTEIN 125"/>
    <property type="match status" value="1"/>
</dbReference>
<dbReference type="Pfam" id="PF15109">
    <property type="entry name" value="TMEM125"/>
    <property type="match status" value="1"/>
</dbReference>
<accession>Q2HJ59</accession>
<protein>
    <recommendedName>
        <fullName>Transmembrane protein 125</fullName>
    </recommendedName>
</protein>